<keyword id="KW-0024">Alternative initiation</keyword>
<keyword id="KW-0106">Calcium</keyword>
<keyword id="KW-0167">Capsid protein</keyword>
<keyword id="KW-1015">Disulfide bond</keyword>
<keyword id="KW-0325">Glycoprotein</keyword>
<keyword id="KW-1038">Host endoplasmic reticulum</keyword>
<keyword id="KW-0945">Host-virus interaction</keyword>
<keyword id="KW-0479">Metal-binding</keyword>
<keyword id="KW-1152">Outer capsid protein</keyword>
<keyword id="KW-0732">Signal</keyword>
<keyword id="KW-1146">T=13 icosahedral capsid protein</keyword>
<keyword id="KW-0946">Virion</keyword>
<dbReference type="EMBL" id="AB180974">
    <property type="protein sequence ID" value="BAD22590.1"/>
    <property type="molecule type" value="Genomic_RNA"/>
</dbReference>
<dbReference type="SMR" id="Q6L5Y4"/>
<dbReference type="GO" id="GO:0044166">
    <property type="term" value="C:host cell endoplasmic reticulum lumen"/>
    <property type="evidence" value="ECO:0007669"/>
    <property type="project" value="UniProtKB-SubCell"/>
</dbReference>
<dbReference type="GO" id="GO:0039621">
    <property type="term" value="C:T=13 icosahedral viral capsid"/>
    <property type="evidence" value="ECO:0007669"/>
    <property type="project" value="UniProtKB-UniRule"/>
</dbReference>
<dbReference type="GO" id="GO:0039624">
    <property type="term" value="C:viral outer capsid"/>
    <property type="evidence" value="ECO:0007669"/>
    <property type="project" value="UniProtKB-UniRule"/>
</dbReference>
<dbReference type="GO" id="GO:0046872">
    <property type="term" value="F:metal ion binding"/>
    <property type="evidence" value="ECO:0007669"/>
    <property type="project" value="UniProtKB-KW"/>
</dbReference>
<dbReference type="FunFam" id="2.60.120.800:FF:000001">
    <property type="entry name" value="Outer capsid glycoprotein VP7"/>
    <property type="match status" value="1"/>
</dbReference>
<dbReference type="Gene3D" id="3.40.50.11130">
    <property type="entry name" value="Glycoprotein VP7, domain 1"/>
    <property type="match status" value="1"/>
</dbReference>
<dbReference type="Gene3D" id="2.60.120.800">
    <property type="entry name" value="Rotavirus outer-layer protein VP7, domain 2"/>
    <property type="match status" value="1"/>
</dbReference>
<dbReference type="HAMAP" id="MF_04130">
    <property type="entry name" value="Rota_VP7"/>
    <property type="match status" value="1"/>
</dbReference>
<dbReference type="HAMAP" id="MF_04131">
    <property type="entry name" value="Rota_VP7_A"/>
    <property type="match status" value="1"/>
</dbReference>
<dbReference type="InterPro" id="IPR001963">
    <property type="entry name" value="VP7"/>
</dbReference>
<dbReference type="InterPro" id="IPR042207">
    <property type="entry name" value="VP7_1"/>
</dbReference>
<dbReference type="InterPro" id="IPR042210">
    <property type="entry name" value="VP7_2"/>
</dbReference>
<dbReference type="Pfam" id="PF00434">
    <property type="entry name" value="VP7"/>
    <property type="match status" value="1"/>
</dbReference>
<proteinExistence type="inferred from homology"/>
<comment type="function">
    <text evidence="2">Calcium-binding protein that interacts with rotavirus cell receptors once the initial attachment by VP4 has been achieved. Rotavirus attachment and entry into the host cell probably involves multiple sequential contacts between the outer capsid proteins VP4 and VP7, and the cell receptors. Following entry into the host cell, low intracellular or intravesicular Ca(2+) concentration probably causes the calcium-stabilized VP7 trimers to dissociate from the virion. This step is probably necessary for the membrane-disrupting entry step and the release of VP4, which is locked onto the virion by VP7.</text>
</comment>
<comment type="subunit">
    <text evidence="2">Homotrimer; disulfide-linked. 2 Ca(2+) ions bound at each subunit interface in the trimer hold the trimer together. Interacts with the intermediate capsid protein VP6. Interacts with the outer capsid protein VP5*.</text>
</comment>
<comment type="subcellular location">
    <subcellularLocation>
        <location evidence="2">Virion</location>
    </subcellularLocation>
    <subcellularLocation>
        <location evidence="2">Host endoplasmic reticulum lumen</location>
    </subcellularLocation>
    <text evidence="2">The outer layer contains 780 copies of VP7, grouped as 260 trimers. Immature double-layered particles assembled in the cytoplasm bud across the membrane of the endoplasmic reticulum, acquiring during this process a transient lipid membrane that is modified with the ER resident viral glycoproteins NSP4 and VP7; these enveloped particles also contain VP4. As the particles move towards the interior of the ER cisternae, the transient lipid membrane and the non-structural protein NSP4 are lost, while the virus surface proteins VP4 and VP7 rearrange to form the outermost virus protein layer, yielding mature infectious triple-layered particles.</text>
</comment>
<comment type="alternative products">
    <event type="alternative initiation"/>
    <isoform>
        <id>Q6L5Y4-1</id>
        <name>1</name>
        <sequence type="displayed"/>
    </isoform>
    <isoform>
        <id>Q6L5Y4-2</id>
        <name>2</name>
        <sequence type="described" ref="VSP_038630"/>
    </isoform>
</comment>
<comment type="PTM">
    <text evidence="2">N-glycosylated.</text>
</comment>
<comment type="PTM">
    <text evidence="2">The N-terminus is blocked possibly by pyroglutamic acid.</text>
</comment>
<comment type="miscellaneous">
    <text evidence="2">Some rotavirus strains are neuraminidase-sensitive and require sialic acid to attach to the cell surface. Some rotavirus strains are integrin-dependent. Some rotavirus strains depend on ganglioside for their entry into the host cell. Hsp70 also seems to be involved in the entry of some strains.</text>
</comment>
<comment type="miscellaneous">
    <text evidence="2">In group A rotaviruses, VP7 defines the G serotype.</text>
</comment>
<comment type="miscellaneous">
    <molecule>Isoform 2</molecule>
    <text evidence="3">Produced by alternative initiation at Met-30 of isoform 1.</text>
</comment>
<comment type="similarity">
    <text evidence="2">Belongs to the rotavirus VP7 family.</text>
</comment>
<accession>Q6L5Y4</accession>
<organism>
    <name type="scientific">Rotavirus A (strain RVA/Human/United States/M/1976/G3P[X])</name>
    <name type="common">RV-A</name>
    <dbReference type="NCBI Taxonomy" id="578834"/>
    <lineage>
        <taxon>Viruses</taxon>
        <taxon>Riboviria</taxon>
        <taxon>Orthornavirae</taxon>
        <taxon>Duplornaviricota</taxon>
        <taxon>Resentoviricetes</taxon>
        <taxon>Reovirales</taxon>
        <taxon>Sedoreoviridae</taxon>
        <taxon>Rotavirus</taxon>
        <taxon>Rotavirus A</taxon>
    </lineage>
</organism>
<evidence type="ECO:0000255" key="1"/>
<evidence type="ECO:0000255" key="2">
    <source>
        <dbReference type="HAMAP-Rule" id="MF_04131"/>
    </source>
</evidence>
<evidence type="ECO:0000305" key="3"/>
<organismHost>
    <name type="scientific">Homo sapiens</name>
    <name type="common">Human</name>
    <dbReference type="NCBI Taxonomy" id="9606"/>
</organismHost>
<sequence>MYGIEYTTVLTFLISVILLNYVLKSLTRIMDFIIYRFLLIIVILSPLLDAQNYGINLPITGSMDTPYTNSTREEVFLTSTLCLYYPTEAATEINDNSWKDTLSQLFLTKGWPTGSIYFKDYTDIASFSVDPQLYCDYNLVLMKYDATLQLDMSELADLLLNEWLCNPMDITLYYYQQTDEANKWISMGSSCTIKVCPLNTQTLGIGCLTTDTNTFEEVATAEKLVITDVVDGVNHKLKVTTDTCTIRNCKKLGPRENVAVIQVGGSDVLDITADPTTAPQTERMMRVNWKKWWQVFYTIVDYVNQIVQAMSKRSRSLNSAAFYYRV</sequence>
<name>VP7_ROTAM</name>
<reference key="1">
    <citation type="submission" date="2004-06" db="EMBL/GenBank/DDBJ databases">
        <title>VP7 genes of group A rotaviruses.</title>
        <authorList>
            <person name="Honma S."/>
            <person name="Hoshino Y."/>
        </authorList>
    </citation>
    <scope>NUCLEOTIDE SEQUENCE [GENOMIC RNA]</scope>
</reference>
<feature type="signal peptide" evidence="2">
    <location>
        <begin position="1"/>
        <end position="50"/>
    </location>
</feature>
<feature type="chain" id="PRO_0000369117" description="Outer capsid glycoprotein VP7" evidence="2">
    <location>
        <begin position="51"/>
        <end position="326"/>
    </location>
</feature>
<feature type="region of interest" description="CNP motif; interaction with ITGAV/ITGB3" evidence="2">
    <location>
        <begin position="165"/>
        <end position="167"/>
    </location>
</feature>
<feature type="region of interest" description="GPR motif; interaction with ITGAX/ITGB2" evidence="2">
    <location>
        <begin position="253"/>
        <end position="255"/>
    </location>
</feature>
<feature type="binding site" evidence="2">
    <location>
        <position position="95"/>
    </location>
    <ligand>
        <name>Ca(2+)</name>
        <dbReference type="ChEBI" id="CHEBI:29108"/>
        <label>1</label>
    </ligand>
</feature>
<feature type="binding site" evidence="2">
    <location>
        <position position="177"/>
    </location>
    <ligand>
        <name>Ca(2+)</name>
        <dbReference type="ChEBI" id="CHEBI:29108"/>
        <label>2</label>
    </ligand>
</feature>
<feature type="binding site" evidence="2">
    <location>
        <position position="206"/>
    </location>
    <ligand>
        <name>Ca(2+)</name>
        <dbReference type="ChEBI" id="CHEBI:29108"/>
        <label>1</label>
    </ligand>
</feature>
<feature type="binding site" evidence="2">
    <location>
        <position position="214"/>
    </location>
    <ligand>
        <name>Ca(2+)</name>
        <dbReference type="ChEBI" id="CHEBI:29108"/>
        <label>1</label>
    </ligand>
</feature>
<feature type="binding site" evidence="2">
    <location>
        <position position="216"/>
    </location>
    <ligand>
        <name>Ca(2+)</name>
        <dbReference type="ChEBI" id="CHEBI:29108"/>
        <label>1</label>
    </ligand>
</feature>
<feature type="binding site" evidence="2">
    <location>
        <position position="228"/>
    </location>
    <ligand>
        <name>Ca(2+)</name>
        <dbReference type="ChEBI" id="CHEBI:29108"/>
        <label>2</label>
    </ligand>
</feature>
<feature type="binding site" evidence="2">
    <location>
        <position position="229"/>
    </location>
    <ligand>
        <name>Ca(2+)</name>
        <dbReference type="ChEBI" id="CHEBI:29108"/>
        <label>2</label>
    </ligand>
</feature>
<feature type="binding site" evidence="2">
    <location>
        <position position="231"/>
    </location>
    <ligand>
        <name>Ca(2+)</name>
        <dbReference type="ChEBI" id="CHEBI:29108"/>
        <label>2</label>
    </ligand>
</feature>
<feature type="binding site" evidence="2">
    <location>
        <position position="301"/>
    </location>
    <ligand>
        <name>Ca(2+)</name>
        <dbReference type="ChEBI" id="CHEBI:29108"/>
        <label>2</label>
    </ligand>
</feature>
<feature type="glycosylation site" description="N-linked (GlcNAc...) asparagine; by host" evidence="1">
    <location>
        <position position="69"/>
    </location>
</feature>
<feature type="disulfide bond" evidence="2">
    <location>
        <begin position="82"/>
        <end position="135"/>
    </location>
</feature>
<feature type="disulfide bond" evidence="2">
    <location>
        <begin position="165"/>
        <end position="249"/>
    </location>
</feature>
<feature type="disulfide bond" evidence="2">
    <location>
        <begin position="191"/>
        <end position="244"/>
    </location>
</feature>
<feature type="disulfide bond" evidence="2">
    <location>
        <begin position="196"/>
        <end position="207"/>
    </location>
</feature>
<feature type="splice variant" id="VSP_038630" description="In isoform 2." evidence="3">
    <location>
        <begin position="1"/>
        <end position="29"/>
    </location>
</feature>
<protein>
    <recommendedName>
        <fullName evidence="2">Outer capsid glycoprotein VP7</fullName>
    </recommendedName>
</protein>